<evidence type="ECO:0000250" key="1"/>
<evidence type="ECO:0000255" key="2">
    <source>
        <dbReference type="PROSITE-ProRule" id="PRU00108"/>
    </source>
</evidence>
<evidence type="ECO:0000255" key="3">
    <source>
        <dbReference type="PROSITE-ProRule" id="PRU00125"/>
    </source>
</evidence>
<evidence type="ECO:0000256" key="4">
    <source>
        <dbReference type="SAM" id="MobiDB-lite"/>
    </source>
</evidence>
<evidence type="ECO:0000269" key="5">
    <source>
    </source>
</evidence>
<gene>
    <name type="primary">lhx9</name>
</gene>
<accession>A2I8Z7</accession>
<protein>
    <recommendedName>
        <fullName>LIM/homeobox protein Lhx9</fullName>
        <shortName>LIM homeobox protein 9</shortName>
    </recommendedName>
</protein>
<dbReference type="EMBL" id="EF175738">
    <property type="protein sequence ID" value="ABM55505.1"/>
    <property type="molecule type" value="mRNA"/>
</dbReference>
<dbReference type="BMRB" id="A2I8Z7"/>
<dbReference type="KEGG" id="amex:103038813"/>
<dbReference type="GO" id="GO:0005634">
    <property type="term" value="C:nucleus"/>
    <property type="evidence" value="ECO:0007669"/>
    <property type="project" value="UniProtKB-SubCell"/>
</dbReference>
<dbReference type="GO" id="GO:0000981">
    <property type="term" value="F:DNA-binding transcription factor activity, RNA polymerase II-specific"/>
    <property type="evidence" value="ECO:0007669"/>
    <property type="project" value="InterPro"/>
</dbReference>
<dbReference type="GO" id="GO:0046872">
    <property type="term" value="F:metal ion binding"/>
    <property type="evidence" value="ECO:0007669"/>
    <property type="project" value="UniProtKB-KW"/>
</dbReference>
<dbReference type="GO" id="GO:0000977">
    <property type="term" value="F:RNA polymerase II transcription regulatory region sequence-specific DNA binding"/>
    <property type="evidence" value="ECO:0007669"/>
    <property type="project" value="TreeGrafter"/>
</dbReference>
<dbReference type="GO" id="GO:0097380">
    <property type="term" value="P:dorsal spinal cord interneuron anterior axon guidance"/>
    <property type="evidence" value="ECO:0000250"/>
    <property type="project" value="UniProtKB"/>
</dbReference>
<dbReference type="GO" id="GO:0045892">
    <property type="term" value="P:negative regulation of DNA-templated transcription"/>
    <property type="evidence" value="ECO:0000250"/>
    <property type="project" value="UniProtKB"/>
</dbReference>
<dbReference type="CDD" id="cd00086">
    <property type="entry name" value="homeodomain"/>
    <property type="match status" value="1"/>
</dbReference>
<dbReference type="CDD" id="cd09469">
    <property type="entry name" value="LIM1_Lhx2"/>
    <property type="match status" value="1"/>
</dbReference>
<dbReference type="CDD" id="cd09377">
    <property type="entry name" value="LIM2_Lhx2_Lhx9"/>
    <property type="match status" value="1"/>
</dbReference>
<dbReference type="FunFam" id="1.10.10.60:FF:000027">
    <property type="entry name" value="LIM/homeobox protein Lhx9"/>
    <property type="match status" value="1"/>
</dbReference>
<dbReference type="FunFam" id="2.10.110.10:FF:000039">
    <property type="entry name" value="LIM/homeobox protein Lhx9 isoform 2"/>
    <property type="match status" value="1"/>
</dbReference>
<dbReference type="FunFam" id="2.10.110.10:FF:000033">
    <property type="entry name" value="LIM/homeobox protein Lhx9 isoform X2"/>
    <property type="match status" value="1"/>
</dbReference>
<dbReference type="Gene3D" id="2.10.110.10">
    <property type="entry name" value="Cysteine Rich Protein"/>
    <property type="match status" value="2"/>
</dbReference>
<dbReference type="Gene3D" id="1.10.10.60">
    <property type="entry name" value="Homeodomain-like"/>
    <property type="match status" value="1"/>
</dbReference>
<dbReference type="InterPro" id="IPR001356">
    <property type="entry name" value="HD"/>
</dbReference>
<dbReference type="InterPro" id="IPR017970">
    <property type="entry name" value="Homeobox_CS"/>
</dbReference>
<dbReference type="InterPro" id="IPR009057">
    <property type="entry name" value="Homeodomain-like_sf"/>
</dbReference>
<dbReference type="InterPro" id="IPR050453">
    <property type="entry name" value="LIM_Homeobox_TF"/>
</dbReference>
<dbReference type="InterPro" id="IPR001781">
    <property type="entry name" value="Znf_LIM"/>
</dbReference>
<dbReference type="PANTHER" id="PTHR24208">
    <property type="entry name" value="LIM/HOMEOBOX PROTEIN LHX"/>
    <property type="match status" value="1"/>
</dbReference>
<dbReference type="PANTHER" id="PTHR24208:SF95">
    <property type="entry name" value="LIM_HOMEOBOX PROTEIN LHX9"/>
    <property type="match status" value="1"/>
</dbReference>
<dbReference type="Pfam" id="PF00046">
    <property type="entry name" value="Homeodomain"/>
    <property type="match status" value="1"/>
</dbReference>
<dbReference type="Pfam" id="PF00412">
    <property type="entry name" value="LIM"/>
    <property type="match status" value="2"/>
</dbReference>
<dbReference type="SMART" id="SM00389">
    <property type="entry name" value="HOX"/>
    <property type="match status" value="1"/>
</dbReference>
<dbReference type="SMART" id="SM00132">
    <property type="entry name" value="LIM"/>
    <property type="match status" value="2"/>
</dbReference>
<dbReference type="SUPFAM" id="SSF57716">
    <property type="entry name" value="Glucocorticoid receptor-like (DNA-binding domain)"/>
    <property type="match status" value="2"/>
</dbReference>
<dbReference type="SUPFAM" id="SSF46689">
    <property type="entry name" value="Homeodomain-like"/>
    <property type="match status" value="1"/>
</dbReference>
<dbReference type="PROSITE" id="PS00027">
    <property type="entry name" value="HOMEOBOX_1"/>
    <property type="match status" value="1"/>
</dbReference>
<dbReference type="PROSITE" id="PS50071">
    <property type="entry name" value="HOMEOBOX_2"/>
    <property type="match status" value="1"/>
</dbReference>
<dbReference type="PROSITE" id="PS00478">
    <property type="entry name" value="LIM_DOMAIN_1"/>
    <property type="match status" value="2"/>
</dbReference>
<dbReference type="PROSITE" id="PS50023">
    <property type="entry name" value="LIM_DOMAIN_2"/>
    <property type="match status" value="2"/>
</dbReference>
<sequence>MLFHGIPGEHIQGIMEEMERRSKSESRLAKTVQMNGRETSMPSVSPEKPALCAGCGSKISDRYYLLAVDKQWHLRCLKCCECKLALESELTCFAKDGSIYCKEDYYRRFSVQRCARCHLGISASEMVMRARDSVYHLSCFTCTSCNKTLTTGDHFGMRENLVYCRAHFESLVQGEYHAPLNYAELAAKGGGLALPYFNGASAVQKGRPRKRKSPAMGIDINTYNSGCNENDADHLDRDQQPYPPSQKTKXMRTSFKHHQLRTMKSYFAINHNPDAKDLKQLAQKTGLTKRVLQVWFQNARAKFRRNVLRQENGGVDKADGTSLPPPSSDSGALTPPSTATTLTDLTNPSITVVTSVTSSLDSHDSGSPPQTTLTNLF</sequence>
<name>LHX9_PSAFA</name>
<comment type="function">
    <text evidence="1">May be involved in gonadal development.</text>
</comment>
<comment type="subcellular location">
    <subcellularLocation>
        <location evidence="2">Nucleus</location>
    </subcellularLocation>
</comment>
<comment type="developmental stage">
    <text evidence="5">In the telencephalon, expressed at 48 hours post-fertilization (hpf) in the olfactory epithelium.</text>
</comment>
<organism>
    <name type="scientific">Psalidodon fasciatus</name>
    <name type="common">Banded astyanax</name>
    <name type="synonym">Astyanax fasciatus</name>
    <dbReference type="NCBI Taxonomy" id="223369"/>
    <lineage>
        <taxon>Eukaryota</taxon>
        <taxon>Metazoa</taxon>
        <taxon>Chordata</taxon>
        <taxon>Craniata</taxon>
        <taxon>Vertebrata</taxon>
        <taxon>Euteleostomi</taxon>
        <taxon>Actinopterygii</taxon>
        <taxon>Neopterygii</taxon>
        <taxon>Teleostei</taxon>
        <taxon>Ostariophysi</taxon>
        <taxon>Characiformes</taxon>
        <taxon>Characoidei</taxon>
        <taxon>Acestrorhamphidae</taxon>
        <taxon>Acestrorhamphidae polyphyletic genera</taxon>
        <taxon>Psalidodon</taxon>
    </lineage>
</organism>
<proteinExistence type="evidence at transcript level"/>
<keyword id="KW-0238">DNA-binding</keyword>
<keyword id="KW-0371">Homeobox</keyword>
<keyword id="KW-0440">LIM domain</keyword>
<keyword id="KW-0479">Metal-binding</keyword>
<keyword id="KW-0539">Nucleus</keyword>
<keyword id="KW-0677">Repeat</keyword>
<keyword id="KW-0862">Zinc</keyword>
<feature type="chain" id="PRO_0000364230" description="LIM/homeobox protein Lhx9">
    <location>
        <begin position="1"/>
        <end position="377"/>
    </location>
</feature>
<feature type="domain" description="LIM zinc-binding 1" evidence="3">
    <location>
        <begin position="50"/>
        <end position="111"/>
    </location>
</feature>
<feature type="domain" description="LIM zinc-binding 2" evidence="3">
    <location>
        <begin position="112"/>
        <end position="174"/>
    </location>
</feature>
<feature type="DNA-binding region" description="Homeobox" evidence="2">
    <location>
        <begin position="248"/>
        <end position="307"/>
    </location>
</feature>
<feature type="region of interest" description="Disordered" evidence="4">
    <location>
        <begin position="228"/>
        <end position="249"/>
    </location>
</feature>
<feature type="region of interest" description="Disordered" evidence="4">
    <location>
        <begin position="309"/>
        <end position="346"/>
    </location>
</feature>
<feature type="region of interest" description="Disordered" evidence="4">
    <location>
        <begin position="358"/>
        <end position="377"/>
    </location>
</feature>
<feature type="compositionally biased region" description="Low complexity" evidence="4">
    <location>
        <begin position="333"/>
        <end position="346"/>
    </location>
</feature>
<feature type="compositionally biased region" description="Polar residues" evidence="4">
    <location>
        <begin position="365"/>
        <end position="377"/>
    </location>
</feature>
<reference key="1">
    <citation type="journal article" date="2007" name="Development">
        <title>Expanded expression of Sonic Hedgehog in Astyanax cavefish: multiple consequences on forebrain development and evolution.</title>
        <authorList>
            <person name="Menuet A."/>
            <person name="Alunni A."/>
            <person name="Joly J.-S."/>
            <person name="Jeffery W.R."/>
            <person name="Retaux S."/>
        </authorList>
    </citation>
    <scope>NUCLEOTIDE SEQUENCE [MRNA]</scope>
    <scope>DEVELOPMENTAL STAGE</scope>
</reference>